<proteinExistence type="inferred from homology"/>
<evidence type="ECO:0000255" key="1">
    <source>
        <dbReference type="HAMAP-Rule" id="MF_01702"/>
    </source>
</evidence>
<dbReference type="EC" id="7.3.2.1" evidence="1"/>
<dbReference type="EMBL" id="CP000259">
    <property type="protein sequence ID" value="ABF32243.1"/>
    <property type="molecule type" value="Genomic_DNA"/>
</dbReference>
<dbReference type="SMR" id="Q1JLH6"/>
<dbReference type="KEGG" id="spk:MGAS9429_Spy1056"/>
<dbReference type="HOGENOM" id="CLU_000604_1_22_9"/>
<dbReference type="Proteomes" id="UP000002433">
    <property type="component" value="Chromosome"/>
</dbReference>
<dbReference type="GO" id="GO:0005886">
    <property type="term" value="C:plasma membrane"/>
    <property type="evidence" value="ECO:0007669"/>
    <property type="project" value="UniProtKB-SubCell"/>
</dbReference>
<dbReference type="GO" id="GO:0005524">
    <property type="term" value="F:ATP binding"/>
    <property type="evidence" value="ECO:0007669"/>
    <property type="project" value="UniProtKB-KW"/>
</dbReference>
<dbReference type="GO" id="GO:0016887">
    <property type="term" value="F:ATP hydrolysis activity"/>
    <property type="evidence" value="ECO:0007669"/>
    <property type="project" value="InterPro"/>
</dbReference>
<dbReference type="GO" id="GO:0015415">
    <property type="term" value="F:ATPase-coupled phosphate ion transmembrane transporter activity"/>
    <property type="evidence" value="ECO:0007669"/>
    <property type="project" value="UniProtKB-EC"/>
</dbReference>
<dbReference type="GO" id="GO:0035435">
    <property type="term" value="P:phosphate ion transmembrane transport"/>
    <property type="evidence" value="ECO:0007669"/>
    <property type="project" value="InterPro"/>
</dbReference>
<dbReference type="CDD" id="cd03260">
    <property type="entry name" value="ABC_PstB_phosphate_transporter"/>
    <property type="match status" value="1"/>
</dbReference>
<dbReference type="Gene3D" id="3.40.50.300">
    <property type="entry name" value="P-loop containing nucleotide triphosphate hydrolases"/>
    <property type="match status" value="1"/>
</dbReference>
<dbReference type="InterPro" id="IPR003593">
    <property type="entry name" value="AAA+_ATPase"/>
</dbReference>
<dbReference type="InterPro" id="IPR003439">
    <property type="entry name" value="ABC_transporter-like_ATP-bd"/>
</dbReference>
<dbReference type="InterPro" id="IPR017871">
    <property type="entry name" value="ABC_transporter-like_CS"/>
</dbReference>
<dbReference type="InterPro" id="IPR027417">
    <property type="entry name" value="P-loop_NTPase"/>
</dbReference>
<dbReference type="InterPro" id="IPR005670">
    <property type="entry name" value="PstB-like"/>
</dbReference>
<dbReference type="NCBIfam" id="TIGR00972">
    <property type="entry name" value="3a0107s01c2"/>
    <property type="match status" value="1"/>
</dbReference>
<dbReference type="PANTHER" id="PTHR43423">
    <property type="entry name" value="ABC TRANSPORTER I FAMILY MEMBER 17"/>
    <property type="match status" value="1"/>
</dbReference>
<dbReference type="PANTHER" id="PTHR43423:SF10">
    <property type="entry name" value="PHOSPHATE IMPORT ATP-BINDING PROTEIN PSTB 2"/>
    <property type="match status" value="1"/>
</dbReference>
<dbReference type="Pfam" id="PF00005">
    <property type="entry name" value="ABC_tran"/>
    <property type="match status" value="1"/>
</dbReference>
<dbReference type="SMART" id="SM00382">
    <property type="entry name" value="AAA"/>
    <property type="match status" value="1"/>
</dbReference>
<dbReference type="SUPFAM" id="SSF52540">
    <property type="entry name" value="P-loop containing nucleoside triphosphate hydrolases"/>
    <property type="match status" value="1"/>
</dbReference>
<dbReference type="PROSITE" id="PS00211">
    <property type="entry name" value="ABC_TRANSPORTER_1"/>
    <property type="match status" value="1"/>
</dbReference>
<dbReference type="PROSITE" id="PS50893">
    <property type="entry name" value="ABC_TRANSPORTER_2"/>
    <property type="match status" value="1"/>
</dbReference>
<dbReference type="PROSITE" id="PS51238">
    <property type="entry name" value="PSTB"/>
    <property type="match status" value="1"/>
</dbReference>
<organism>
    <name type="scientific">Streptococcus pyogenes serotype M12 (strain MGAS9429)</name>
    <dbReference type="NCBI Taxonomy" id="370551"/>
    <lineage>
        <taxon>Bacteria</taxon>
        <taxon>Bacillati</taxon>
        <taxon>Bacillota</taxon>
        <taxon>Bacilli</taxon>
        <taxon>Lactobacillales</taxon>
        <taxon>Streptococcaceae</taxon>
        <taxon>Streptococcus</taxon>
    </lineage>
</organism>
<comment type="function">
    <text evidence="1">Part of the ABC transporter complex PstSACB involved in phosphate import. Responsible for energy coupling to the transport system.</text>
</comment>
<comment type="catalytic activity">
    <reaction evidence="1">
        <text>phosphate(out) + ATP + H2O = ADP + 2 phosphate(in) + H(+)</text>
        <dbReference type="Rhea" id="RHEA:24440"/>
        <dbReference type="ChEBI" id="CHEBI:15377"/>
        <dbReference type="ChEBI" id="CHEBI:15378"/>
        <dbReference type="ChEBI" id="CHEBI:30616"/>
        <dbReference type="ChEBI" id="CHEBI:43474"/>
        <dbReference type="ChEBI" id="CHEBI:456216"/>
        <dbReference type="EC" id="7.3.2.1"/>
    </reaction>
</comment>
<comment type="subunit">
    <text evidence="1">The complex is composed of two ATP-binding proteins (PstB), two transmembrane proteins (PstC and PstA) and a solute-binding protein (PstS).</text>
</comment>
<comment type="subcellular location">
    <subcellularLocation>
        <location evidence="1">Cell membrane</location>
        <topology evidence="1">Peripheral membrane protein</topology>
    </subcellularLocation>
</comment>
<comment type="similarity">
    <text evidence="1">Belongs to the ABC transporter superfamily. Phosphate importer (TC 3.A.1.7) family.</text>
</comment>
<accession>Q1JLH6</accession>
<feature type="chain" id="PRO_0000272544" description="Phosphate import ATP-binding protein PstB 2">
    <location>
        <begin position="1"/>
        <end position="267"/>
    </location>
</feature>
<feature type="domain" description="ABC transporter" evidence="1">
    <location>
        <begin position="21"/>
        <end position="262"/>
    </location>
</feature>
<feature type="binding site" evidence="1">
    <location>
        <begin position="53"/>
        <end position="60"/>
    </location>
    <ligand>
        <name>ATP</name>
        <dbReference type="ChEBI" id="CHEBI:30616"/>
    </ligand>
</feature>
<gene>
    <name evidence="1" type="primary">pstB2</name>
    <name type="ordered locus">MGAS9429_Spy1056</name>
</gene>
<keyword id="KW-0067">ATP-binding</keyword>
<keyword id="KW-1003">Cell membrane</keyword>
<keyword id="KW-0472">Membrane</keyword>
<keyword id="KW-0547">Nucleotide-binding</keyword>
<keyword id="KW-0592">Phosphate transport</keyword>
<keyword id="KW-1278">Translocase</keyword>
<keyword id="KW-0813">Transport</keyword>
<name>PSTB2_STRPC</name>
<protein>
    <recommendedName>
        <fullName evidence="1">Phosphate import ATP-binding protein PstB 2</fullName>
        <ecNumber evidence="1">7.3.2.1</ecNumber>
    </recommendedName>
    <alternativeName>
        <fullName evidence="1">ABC phosphate transporter 2</fullName>
    </alternativeName>
    <alternativeName>
        <fullName evidence="1">Phosphate-transporting ATPase 2</fullName>
    </alternativeName>
</protein>
<reference key="1">
    <citation type="journal article" date="2006" name="Proc. Natl. Acad. Sci. U.S.A.">
        <title>Molecular genetic anatomy of inter- and intraserotype variation in the human bacterial pathogen group A Streptococcus.</title>
        <authorList>
            <person name="Beres S.B."/>
            <person name="Richter E.W."/>
            <person name="Nagiec M.J."/>
            <person name="Sumby P."/>
            <person name="Porcella S.F."/>
            <person name="DeLeo F.R."/>
            <person name="Musser J.M."/>
        </authorList>
    </citation>
    <scope>NUCLEOTIDE SEQUENCE [LARGE SCALE GENOMIC DNA]</scope>
    <source>
        <strain>MGAS9429</strain>
    </source>
</reference>
<sequence length="267" mass="30482">MTEYNWNERHIITFPEETLALATKDLHVYYGAKEAIKGIDMQFEKHKITALIGPSGCGKSTYLRSLNRMNDTIDIARVTGEILYQGIDVNRKDMNVYEIRKHLGMVFQRPNPFAKSIYKNITFAHERAGVKDKKVLDEIVETSLKQAALWDQVKDDLHKSAFTLSGGQQQRLCIARAISVKPDILLMDEPASALDPIATMQLEETMFELKKNYTIIIVTHNMQQAARASDYTAFFYLGNLIEYDKTRNIFQNAQCQSTNDYVSGHFG</sequence>